<feature type="signal peptide" evidence="1">
    <location>
        <begin position="1"/>
        <end position="19"/>
    </location>
</feature>
<feature type="chain" id="PRO_1000185915" description="Membrane-bound lytic murein transglycosylase C">
    <location>
        <begin position="20"/>
        <end position="365"/>
    </location>
</feature>
<feature type="lipid moiety-binding region" description="N-palmitoyl cysteine" evidence="1">
    <location>
        <position position="20"/>
    </location>
</feature>
<feature type="lipid moiety-binding region" description="S-diacylglycerol cysteine" evidence="1">
    <location>
        <position position="20"/>
    </location>
</feature>
<proteinExistence type="inferred from homology"/>
<protein>
    <recommendedName>
        <fullName evidence="1">Membrane-bound lytic murein transglycosylase C</fullName>
        <ecNumber evidence="1">4.2.2.n1</ecNumber>
    </recommendedName>
    <alternativeName>
        <fullName evidence="1">Murein lyase C</fullName>
    </alternativeName>
</protein>
<gene>
    <name evidence="1" type="primary">mltC</name>
    <name type="ordered locus">APP7_1802</name>
</gene>
<name>MLTC_ACTP7</name>
<sequence>MKKYTKYLPLLLIIPFLAACGSSSPKKSKRTKTRVDYNTKDTNGLDILTGQFSHNIDDIWGSNELLVASKKDYVKYTDKFYTRSHISFEDGQITIETLGDQNHLRNSIIHTLLMGSDPKGIDLFASGDAPISSNPFLAGQVNDQFGRDINNIAIANDFATYLIQNKLQTRRLQNGRTVTYVAIKMVAGHIEVRARQYLPLVRKMAKRYGIEPSLILGIMEVESAFNPYAVSYANAIGLMQVVPRTAGRDIFARKGFDGQPDRAYLYNPSQNIDSGTLYLAILRDEYLEGITNPTAKRYAMISAYNSGAGAVLKVFDYDKYDAIDRINELSPDAVYRILTTAHPSSQARNYLKKVSKAREKYLHIR</sequence>
<accession>B3GYW8</accession>
<reference key="1">
    <citation type="submission" date="2008-06" db="EMBL/GenBank/DDBJ databases">
        <title>Genome and proteome analysis of A. pleuropneumoniae serotype 7.</title>
        <authorList>
            <person name="Linke B."/>
            <person name="Buettner F."/>
            <person name="Martinez-Arias R."/>
            <person name="Goesmann A."/>
            <person name="Baltes N."/>
            <person name="Tegetmeyer H."/>
            <person name="Singh M."/>
            <person name="Gerlach G.F."/>
        </authorList>
    </citation>
    <scope>NUCLEOTIDE SEQUENCE [LARGE SCALE GENOMIC DNA]</scope>
    <source>
        <strain>AP76</strain>
    </source>
</reference>
<organism>
    <name type="scientific">Actinobacillus pleuropneumoniae serotype 7 (strain AP76)</name>
    <dbReference type="NCBI Taxonomy" id="537457"/>
    <lineage>
        <taxon>Bacteria</taxon>
        <taxon>Pseudomonadati</taxon>
        <taxon>Pseudomonadota</taxon>
        <taxon>Gammaproteobacteria</taxon>
        <taxon>Pasteurellales</taxon>
        <taxon>Pasteurellaceae</taxon>
        <taxon>Actinobacillus</taxon>
    </lineage>
</organism>
<dbReference type="EC" id="4.2.2.n1" evidence="1"/>
<dbReference type="EMBL" id="CP001091">
    <property type="protein sequence ID" value="ACE62454.1"/>
    <property type="molecule type" value="Genomic_DNA"/>
</dbReference>
<dbReference type="RefSeq" id="WP_005599253.1">
    <property type="nucleotide sequence ID" value="NC_010939.1"/>
</dbReference>
<dbReference type="SMR" id="B3GYW8"/>
<dbReference type="CAZy" id="GH23">
    <property type="family name" value="Glycoside Hydrolase Family 23"/>
</dbReference>
<dbReference type="GeneID" id="48600031"/>
<dbReference type="KEGG" id="apa:APP7_1802"/>
<dbReference type="HOGENOM" id="CLU_044583_0_0_6"/>
<dbReference type="Proteomes" id="UP000001226">
    <property type="component" value="Chromosome"/>
</dbReference>
<dbReference type="GO" id="GO:0009279">
    <property type="term" value="C:cell outer membrane"/>
    <property type="evidence" value="ECO:0007669"/>
    <property type="project" value="UniProtKB-SubCell"/>
</dbReference>
<dbReference type="GO" id="GO:0016798">
    <property type="term" value="F:hydrolase activity, acting on glycosyl bonds"/>
    <property type="evidence" value="ECO:0007669"/>
    <property type="project" value="InterPro"/>
</dbReference>
<dbReference type="GO" id="GO:0008933">
    <property type="term" value="F:peptidoglycan lytic transglycosylase activity"/>
    <property type="evidence" value="ECO:0007669"/>
    <property type="project" value="UniProtKB-UniRule"/>
</dbReference>
<dbReference type="GO" id="GO:0016998">
    <property type="term" value="P:cell wall macromolecule catabolic process"/>
    <property type="evidence" value="ECO:0007669"/>
    <property type="project" value="UniProtKB-UniRule"/>
</dbReference>
<dbReference type="GO" id="GO:0071555">
    <property type="term" value="P:cell wall organization"/>
    <property type="evidence" value="ECO:0007669"/>
    <property type="project" value="UniProtKB-KW"/>
</dbReference>
<dbReference type="GO" id="GO:0000270">
    <property type="term" value="P:peptidoglycan metabolic process"/>
    <property type="evidence" value="ECO:0007669"/>
    <property type="project" value="InterPro"/>
</dbReference>
<dbReference type="CDD" id="cd16893">
    <property type="entry name" value="LT_MltC_MltE"/>
    <property type="match status" value="1"/>
</dbReference>
<dbReference type="Gene3D" id="1.10.530.10">
    <property type="match status" value="1"/>
</dbReference>
<dbReference type="HAMAP" id="MF_01616">
    <property type="entry name" value="MltC"/>
    <property type="match status" value="1"/>
</dbReference>
<dbReference type="InterPro" id="IPR023346">
    <property type="entry name" value="Lysozyme-like_dom_sf"/>
</dbReference>
<dbReference type="InterPro" id="IPR023664">
    <property type="entry name" value="Murein_transglycosylaseC"/>
</dbReference>
<dbReference type="InterPro" id="IPR024570">
    <property type="entry name" value="Murein_transglycosylaseC_N"/>
</dbReference>
<dbReference type="InterPro" id="IPR000189">
    <property type="entry name" value="Transglyc_AS"/>
</dbReference>
<dbReference type="InterPro" id="IPR008258">
    <property type="entry name" value="Transglycosylase_SLT_dom_1"/>
</dbReference>
<dbReference type="NCBIfam" id="NF008670">
    <property type="entry name" value="PRK11671.1"/>
    <property type="match status" value="1"/>
</dbReference>
<dbReference type="PANTHER" id="PTHR37423:SF2">
    <property type="entry name" value="MEMBRANE-BOUND LYTIC MUREIN TRANSGLYCOSYLASE C"/>
    <property type="match status" value="1"/>
</dbReference>
<dbReference type="PANTHER" id="PTHR37423">
    <property type="entry name" value="SOLUBLE LYTIC MUREIN TRANSGLYCOSYLASE-RELATED"/>
    <property type="match status" value="1"/>
</dbReference>
<dbReference type="Pfam" id="PF11873">
    <property type="entry name" value="Mltc_N"/>
    <property type="match status" value="1"/>
</dbReference>
<dbReference type="Pfam" id="PF01464">
    <property type="entry name" value="SLT"/>
    <property type="match status" value="1"/>
</dbReference>
<dbReference type="SUPFAM" id="SSF53955">
    <property type="entry name" value="Lysozyme-like"/>
    <property type="match status" value="1"/>
</dbReference>
<dbReference type="PROSITE" id="PS51257">
    <property type="entry name" value="PROKAR_LIPOPROTEIN"/>
    <property type="match status" value="1"/>
</dbReference>
<dbReference type="PROSITE" id="PS00922">
    <property type="entry name" value="TRANSGLYCOSYLASE"/>
    <property type="match status" value="1"/>
</dbReference>
<keyword id="KW-0998">Cell outer membrane</keyword>
<keyword id="KW-0961">Cell wall biogenesis/degradation</keyword>
<keyword id="KW-0449">Lipoprotein</keyword>
<keyword id="KW-0456">Lyase</keyword>
<keyword id="KW-0472">Membrane</keyword>
<keyword id="KW-0564">Palmitate</keyword>
<keyword id="KW-0732">Signal</keyword>
<comment type="function">
    <text evidence="1">Murein-degrading enzyme. May play a role in recycling of muropeptides during cell elongation and/or cell division.</text>
</comment>
<comment type="catalytic activity">
    <reaction evidence="1">
        <text>Exolytic cleavage of the (1-&gt;4)-beta-glycosidic linkage between N-acetylmuramic acid (MurNAc) and N-acetylglucosamine (GlcNAc) residues in peptidoglycan, from either the reducing or the non-reducing ends of the peptidoglycan chains, with concomitant formation of a 1,6-anhydrobond in the MurNAc residue.</text>
        <dbReference type="EC" id="4.2.2.n1"/>
    </reaction>
</comment>
<comment type="subcellular location">
    <subcellularLocation>
        <location evidence="1">Cell outer membrane</location>
        <topology evidence="1">Lipid-anchor</topology>
    </subcellularLocation>
</comment>
<comment type="similarity">
    <text evidence="1">Belongs to the transglycosylase Slt family.</text>
</comment>
<evidence type="ECO:0000255" key="1">
    <source>
        <dbReference type="HAMAP-Rule" id="MF_01616"/>
    </source>
</evidence>